<accession>Q9PW36</accession>
<proteinExistence type="evidence at transcript level"/>
<organism>
    <name type="scientific">Deinagkistrodon acutus</name>
    <name type="common">Hundred-pace snake</name>
    <name type="synonym">Agkistrodon acutus</name>
    <dbReference type="NCBI Taxonomy" id="36307"/>
    <lineage>
        <taxon>Eukaryota</taxon>
        <taxon>Metazoa</taxon>
        <taxon>Chordata</taxon>
        <taxon>Craniata</taxon>
        <taxon>Vertebrata</taxon>
        <taxon>Euteleostomi</taxon>
        <taxon>Lepidosauria</taxon>
        <taxon>Squamata</taxon>
        <taxon>Bifurcata</taxon>
        <taxon>Unidentata</taxon>
        <taxon>Episquamata</taxon>
        <taxon>Toxicofera</taxon>
        <taxon>Serpentes</taxon>
        <taxon>Colubroidea</taxon>
        <taxon>Viperidae</taxon>
        <taxon>Crotalinae</taxon>
        <taxon>Deinagkistrodon</taxon>
    </lineage>
</organism>
<protein>
    <recommendedName>
        <fullName>Snake venom metalloproteinase acutolysin-C</fullName>
        <shortName>SVMP</shortName>
        <ecNumber>3.4.24.-</ecNumber>
    </recommendedName>
</protein>
<keyword id="KW-1015">Disulfide bond</keyword>
<keyword id="KW-1200">Hemorrhagic toxin</keyword>
<keyword id="KW-1199">Hemostasis impairing toxin</keyword>
<keyword id="KW-0378">Hydrolase</keyword>
<keyword id="KW-0479">Metal-binding</keyword>
<keyword id="KW-0482">Metalloprotease</keyword>
<keyword id="KW-0645">Protease</keyword>
<keyword id="KW-0964">Secreted</keyword>
<keyword id="KW-0732">Signal</keyword>
<keyword id="KW-0800">Toxin</keyword>
<keyword id="KW-0862">Zinc</keyword>
<keyword id="KW-0865">Zymogen</keyword>
<name>VM1AC_DEIAC</name>
<evidence type="ECO:0000250" key="1"/>
<evidence type="ECO:0000255" key="2"/>
<evidence type="ECO:0000255" key="3">
    <source>
        <dbReference type="PROSITE-ProRule" id="PRU00276"/>
    </source>
</evidence>
<evidence type="ECO:0000255" key="4">
    <source>
        <dbReference type="PROSITE-ProRule" id="PRU10095"/>
    </source>
</evidence>
<evidence type="ECO:0000256" key="5">
    <source>
        <dbReference type="SAM" id="MobiDB-lite"/>
    </source>
</evidence>
<evidence type="ECO:0000305" key="6"/>
<dbReference type="EC" id="3.4.24.-"/>
<dbReference type="EMBL" id="AF174391">
    <property type="protein sequence ID" value="AAD51823.1"/>
    <property type="molecule type" value="mRNA"/>
</dbReference>
<dbReference type="SMR" id="Q9PW36"/>
<dbReference type="MEROPS" id="M12.337"/>
<dbReference type="GO" id="GO:0005576">
    <property type="term" value="C:extracellular region"/>
    <property type="evidence" value="ECO:0000250"/>
    <property type="project" value="UniProtKB"/>
</dbReference>
<dbReference type="GO" id="GO:0005886">
    <property type="term" value="C:plasma membrane"/>
    <property type="evidence" value="ECO:0007669"/>
    <property type="project" value="TreeGrafter"/>
</dbReference>
<dbReference type="GO" id="GO:0005509">
    <property type="term" value="F:calcium ion binding"/>
    <property type="evidence" value="ECO:0000250"/>
    <property type="project" value="UniProtKB"/>
</dbReference>
<dbReference type="GO" id="GO:0004222">
    <property type="term" value="F:metalloendopeptidase activity"/>
    <property type="evidence" value="ECO:0007669"/>
    <property type="project" value="InterPro"/>
</dbReference>
<dbReference type="GO" id="GO:0090729">
    <property type="term" value="F:toxin activity"/>
    <property type="evidence" value="ECO:0007669"/>
    <property type="project" value="UniProtKB-KW"/>
</dbReference>
<dbReference type="GO" id="GO:0008270">
    <property type="term" value="F:zinc ion binding"/>
    <property type="evidence" value="ECO:0000250"/>
    <property type="project" value="UniProtKB"/>
</dbReference>
<dbReference type="GO" id="GO:0006508">
    <property type="term" value="P:proteolysis"/>
    <property type="evidence" value="ECO:0007669"/>
    <property type="project" value="UniProtKB-KW"/>
</dbReference>
<dbReference type="CDD" id="cd04269">
    <property type="entry name" value="ZnMc_adamalysin_II_like"/>
    <property type="match status" value="1"/>
</dbReference>
<dbReference type="FunFam" id="3.40.390.10:FF:000002">
    <property type="entry name" value="Disintegrin and metalloproteinase domain-containing protein 22"/>
    <property type="match status" value="1"/>
</dbReference>
<dbReference type="Gene3D" id="3.40.390.10">
    <property type="entry name" value="Collagenase (Catalytic Domain)"/>
    <property type="match status" value="1"/>
</dbReference>
<dbReference type="InterPro" id="IPR024079">
    <property type="entry name" value="MetalloPept_cat_dom_sf"/>
</dbReference>
<dbReference type="InterPro" id="IPR001590">
    <property type="entry name" value="Peptidase_M12B"/>
</dbReference>
<dbReference type="InterPro" id="IPR002870">
    <property type="entry name" value="Peptidase_M12B_N"/>
</dbReference>
<dbReference type="InterPro" id="IPR034027">
    <property type="entry name" value="Reprolysin_adamalysin"/>
</dbReference>
<dbReference type="PANTHER" id="PTHR11905">
    <property type="entry name" value="ADAM A DISINTEGRIN AND METALLOPROTEASE DOMAIN"/>
    <property type="match status" value="1"/>
</dbReference>
<dbReference type="PANTHER" id="PTHR11905:SF32">
    <property type="entry name" value="DISINTEGRIN AND METALLOPROTEINASE DOMAIN-CONTAINING PROTEIN 28"/>
    <property type="match status" value="1"/>
</dbReference>
<dbReference type="Pfam" id="PF01562">
    <property type="entry name" value="Pep_M12B_propep"/>
    <property type="match status" value="1"/>
</dbReference>
<dbReference type="Pfam" id="PF01421">
    <property type="entry name" value="Reprolysin"/>
    <property type="match status" value="1"/>
</dbReference>
<dbReference type="SUPFAM" id="SSF55486">
    <property type="entry name" value="Metalloproteases ('zincins'), catalytic domain"/>
    <property type="match status" value="1"/>
</dbReference>
<dbReference type="PROSITE" id="PS50215">
    <property type="entry name" value="ADAM_MEPRO"/>
    <property type="match status" value="1"/>
</dbReference>
<dbReference type="PROSITE" id="PS00142">
    <property type="entry name" value="ZINC_PROTEASE"/>
    <property type="match status" value="1"/>
</dbReference>
<reference key="1">
    <citation type="journal article" date="2000" name="Sheng Wu Hua Xue Yu Sheng Wu Wu Li Xue Bao">
        <title>Molecular cloning and sequence analysis of cDNA encoding acutolysin C, a hemorrhagic metalloproteinase, from Agkistrodon acutus.</title>
        <authorList>
            <person name="Liu Q.-D."/>
            <person name="Xu W.-H."/>
            <person name="Cheng X."/>
            <person name="Liu J."/>
        </authorList>
    </citation>
    <scope>NUCLEOTIDE SEQUENCE [MRNA]</scope>
    <source>
        <tissue>Venom gland</tissue>
    </source>
</reference>
<feature type="signal peptide" evidence="2">
    <location>
        <begin position="1"/>
        <end position="20"/>
    </location>
</feature>
<feature type="propeptide" id="PRO_0000028953" description="Activation peptide">
    <location>
        <begin position="21"/>
        <end position="189"/>
    </location>
</feature>
<feature type="chain" id="PRO_0000028954" description="Snake venom metalloproteinase acutolysin-C">
    <location>
        <begin position="190"/>
        <end position="392"/>
    </location>
</feature>
<feature type="propeptide" id="PRO_0000028955">
    <location>
        <begin position="393"/>
        <end position="417"/>
    </location>
</feature>
<feature type="domain" description="Peptidase M12B" evidence="3">
    <location>
        <begin position="197"/>
        <end position="392"/>
    </location>
</feature>
<feature type="region of interest" description="Disordered" evidence="5">
    <location>
        <begin position="398"/>
        <end position="417"/>
    </location>
</feature>
<feature type="compositionally biased region" description="Acidic residues" evidence="5">
    <location>
        <begin position="407"/>
        <end position="417"/>
    </location>
</feature>
<feature type="active site" evidence="3 4">
    <location>
        <position position="334"/>
    </location>
</feature>
<feature type="binding site" evidence="1">
    <location>
        <position position="333"/>
    </location>
    <ligand>
        <name>Zn(2+)</name>
        <dbReference type="ChEBI" id="CHEBI:29105"/>
        <note>catalytic</note>
    </ligand>
</feature>
<feature type="binding site" evidence="1">
    <location>
        <position position="337"/>
    </location>
    <ligand>
        <name>Zn(2+)</name>
        <dbReference type="ChEBI" id="CHEBI:29105"/>
        <note>catalytic</note>
    </ligand>
</feature>
<feature type="binding site" evidence="1">
    <location>
        <position position="343"/>
    </location>
    <ligand>
        <name>Zn(2+)</name>
        <dbReference type="ChEBI" id="CHEBI:29105"/>
        <note>catalytic</note>
    </ligand>
</feature>
<feature type="disulfide bond" evidence="3">
    <location>
        <begin position="308"/>
        <end position="387"/>
    </location>
</feature>
<feature type="disulfide bond" evidence="3">
    <location>
        <begin position="349"/>
        <end position="371"/>
    </location>
</feature>
<feature type="disulfide bond" evidence="3">
    <location>
        <begin position="351"/>
        <end position="354"/>
    </location>
</feature>
<comment type="function">
    <text evidence="1">This protein is an alkaline zinc metalloprotease from snake venom that possesses weak hemorrhagic activity.</text>
</comment>
<comment type="cofactor">
    <cofactor evidence="1">
        <name>Zn(2+)</name>
        <dbReference type="ChEBI" id="CHEBI:29105"/>
    </cofactor>
    <text evidence="1">Binds 1 zinc ion per subunit.</text>
</comment>
<comment type="subunit">
    <text evidence="1">Monomer.</text>
</comment>
<comment type="subcellular location">
    <subcellularLocation>
        <location>Secreted</location>
    </subcellularLocation>
</comment>
<comment type="tissue specificity">
    <text>Expressed by the venom gland.</text>
</comment>
<comment type="similarity">
    <text evidence="6">Belongs to the venom metalloproteinase (M12B) family. P-I subfamily.</text>
</comment>
<comment type="caution">
    <text evidence="6">Two proteins (AC P60244 and AC Q9PW36) have been independently named acutolysin-C.</text>
</comment>
<sequence>MIQVLLVTICLAALPYQGSSIMLESGKVNDYEVVYPQRLAPLPEGAVQQKYEDTMQYEFKVNGETIVLHLEKNKGLFSKDYSETHYSPDGRKITTYPSVEDHCYYHGRIENYEDSTASISACNGLKGHFKIQGETYFIESLKLSDSEAHAVLKYENVGKEDETHQICGVTLNWKSYDPIKRPSRLNLTPKQQTWPQTSVNLQLIVDHSMYAKYNSNSEKITKTVQERVNIMKEIFKPLNFDITLSGIEMWDKKDLITVKTAATDTLKLFAKWRQTDLLKRIDNDNAQLQTAVDFDGETVGLAFKSTMCDKRYSAGIIQDHSAIPLLMAVTIAHELGHNLGMDHDDTSKCNCNVCIMAPRLNTNPSKTFSDCSNNDYQKFLTDKKPKCIHKKSLKTDTVSTSVSGNEPLDDNVDGFHA</sequence>